<feature type="chain" id="PRO_0000095462" description="Glutamate racemase">
    <location>
        <begin position="1"/>
        <end position="250"/>
    </location>
</feature>
<feature type="active site" description="Proton donor/acceptor" evidence="1 2">
    <location>
        <position position="70"/>
    </location>
</feature>
<feature type="active site" description="Proton donor/acceptor" evidence="1 2">
    <location>
        <position position="180"/>
    </location>
</feature>
<feature type="binding site" evidence="2 3 4 5">
    <location>
        <begin position="7"/>
        <end position="8"/>
    </location>
    <ligand>
        <name>substrate</name>
    </ligand>
</feature>
<feature type="binding site" evidence="2 3 4 5">
    <location>
        <begin position="39"/>
        <end position="40"/>
    </location>
    <ligand>
        <name>substrate</name>
    </ligand>
</feature>
<feature type="binding site" evidence="2 3 4 5">
    <location>
        <begin position="71"/>
        <end position="72"/>
    </location>
    <ligand>
        <name>substrate</name>
    </ligand>
</feature>
<feature type="binding site" evidence="2 3 4 5">
    <location>
        <begin position="181"/>
        <end position="182"/>
    </location>
    <ligand>
        <name>substrate</name>
    </ligand>
</feature>
<feature type="strand" evidence="6">
    <location>
        <begin position="2"/>
        <end position="10"/>
    </location>
</feature>
<feature type="helix" evidence="6">
    <location>
        <begin position="13"/>
        <end position="21"/>
    </location>
</feature>
<feature type="strand" evidence="6">
    <location>
        <begin position="26"/>
        <end position="32"/>
    </location>
</feature>
<feature type="turn" evidence="6">
    <location>
        <begin position="34"/>
        <end position="36"/>
    </location>
</feature>
<feature type="helix" evidence="6">
    <location>
        <begin position="44"/>
        <end position="58"/>
    </location>
</feature>
<feature type="strand" evidence="6">
    <location>
        <begin position="64"/>
        <end position="68"/>
    </location>
</feature>
<feature type="helix" evidence="6">
    <location>
        <begin position="71"/>
        <end position="76"/>
    </location>
</feature>
<feature type="helix" evidence="6">
    <location>
        <begin position="78"/>
        <end position="84"/>
    </location>
</feature>
<feature type="strand" evidence="7">
    <location>
        <begin position="89"/>
        <end position="91"/>
    </location>
</feature>
<feature type="helix" evidence="6">
    <location>
        <begin position="93"/>
        <end position="104"/>
    </location>
</feature>
<feature type="strand" evidence="6">
    <location>
        <begin position="111"/>
        <end position="115"/>
    </location>
</feature>
<feature type="helix" evidence="6">
    <location>
        <begin position="117"/>
        <end position="122"/>
    </location>
</feature>
<feature type="helix" evidence="6">
    <location>
        <begin position="124"/>
        <end position="130"/>
    </location>
</feature>
<feature type="turn" evidence="6">
    <location>
        <begin position="131"/>
        <end position="133"/>
    </location>
</feature>
<feature type="strand" evidence="6">
    <location>
        <begin position="137"/>
        <end position="141"/>
    </location>
</feature>
<feature type="helix" evidence="6">
    <location>
        <begin position="145"/>
        <end position="150"/>
    </location>
</feature>
<feature type="helix" evidence="6">
    <location>
        <begin position="157"/>
        <end position="167"/>
    </location>
</feature>
<feature type="strand" evidence="6">
    <location>
        <begin position="174"/>
        <end position="178"/>
    </location>
</feature>
<feature type="strand" evidence="7">
    <location>
        <begin position="180"/>
        <end position="182"/>
    </location>
</feature>
<feature type="helix" evidence="6">
    <location>
        <begin position="183"/>
        <end position="186"/>
    </location>
</feature>
<feature type="helix" evidence="6">
    <location>
        <begin position="187"/>
        <end position="194"/>
    </location>
</feature>
<feature type="strand" evidence="6">
    <location>
        <begin position="199"/>
        <end position="202"/>
    </location>
</feature>
<feature type="helix" evidence="6">
    <location>
        <begin position="203"/>
        <end position="214"/>
    </location>
</feature>
<feature type="strand" evidence="6">
    <location>
        <begin position="225"/>
        <end position="232"/>
    </location>
</feature>
<feature type="helix" evidence="6">
    <location>
        <begin position="234"/>
        <end position="244"/>
    </location>
</feature>
<organism>
    <name type="scientific">Campylobacter jejuni subsp. jejuni serotype O:2 (strain ATCC 700819 / NCTC 11168)</name>
    <dbReference type="NCBI Taxonomy" id="192222"/>
    <lineage>
        <taxon>Bacteria</taxon>
        <taxon>Pseudomonadati</taxon>
        <taxon>Campylobacterota</taxon>
        <taxon>Epsilonproteobacteria</taxon>
        <taxon>Campylobacterales</taxon>
        <taxon>Campylobacteraceae</taxon>
        <taxon>Campylobacter</taxon>
    </lineage>
</organism>
<protein>
    <recommendedName>
        <fullName evidence="2">Glutamate racemase</fullName>
        <ecNumber evidence="2">5.1.1.3</ecNumber>
    </recommendedName>
</protein>
<name>MURI_CAMJE</name>
<sequence>MKIGVFDSGVGGLSVLKSLYEARLFDEIIYYGDTARVPYGVKDKDTIIKFCLEALDFFEQFQIDMLIIACNTASAYALDALRAKAHFPVYGVIDAGVEATIKALHDKNKEILVIATKATIKSEEYQKRLLSQGYTNINALATGLFVPMVEEGIFEGDFLQSAMEYYFKNITTPDALILACTHFPLLGRSLSKYFGDKTKLIHSGDAIVEFLKERENIDLKNHKAKLHFYASSDVESLKNTAKIWLNLLRK</sequence>
<evidence type="ECO:0000250" key="1">
    <source>
        <dbReference type="UniProtKB" id="O58403"/>
    </source>
</evidence>
<evidence type="ECO:0000255" key="2">
    <source>
        <dbReference type="HAMAP-Rule" id="MF_00258"/>
    </source>
</evidence>
<evidence type="ECO:0000269" key="3">
    <source ref="2"/>
</evidence>
<evidence type="ECO:0007744" key="4">
    <source>
        <dbReference type="PDB" id="3UHF"/>
    </source>
</evidence>
<evidence type="ECO:0007744" key="5">
    <source>
        <dbReference type="PDB" id="3UHO"/>
    </source>
</evidence>
<evidence type="ECO:0007829" key="6">
    <source>
        <dbReference type="PDB" id="3UHF"/>
    </source>
</evidence>
<evidence type="ECO:0007829" key="7">
    <source>
        <dbReference type="PDB" id="3UHP"/>
    </source>
</evidence>
<dbReference type="EC" id="5.1.1.3" evidence="2"/>
<dbReference type="EMBL" id="AL111168">
    <property type="protein sequence ID" value="CAL35749.1"/>
    <property type="molecule type" value="Genomic_DNA"/>
</dbReference>
<dbReference type="PIR" id="B81262">
    <property type="entry name" value="B81262"/>
</dbReference>
<dbReference type="RefSeq" id="WP_002851499.1">
    <property type="nucleotide sequence ID" value="NZ_SZUC01000002.1"/>
</dbReference>
<dbReference type="RefSeq" id="YP_002345021.1">
    <property type="nucleotide sequence ID" value="NC_002163.1"/>
</dbReference>
<dbReference type="PDB" id="3UHF">
    <property type="method" value="X-ray"/>
    <property type="resolution" value="1.83 A"/>
    <property type="chains" value="A/B=1-250"/>
</dbReference>
<dbReference type="PDB" id="3UHO">
    <property type="method" value="X-ray"/>
    <property type="resolution" value="2.20 A"/>
    <property type="chains" value="A/B=1-250"/>
</dbReference>
<dbReference type="PDB" id="3UHP">
    <property type="method" value="X-ray"/>
    <property type="resolution" value="2.79 A"/>
    <property type="chains" value="A/B=1-250"/>
</dbReference>
<dbReference type="PDBsum" id="3UHF"/>
<dbReference type="PDBsum" id="3UHO"/>
<dbReference type="PDBsum" id="3UHP"/>
<dbReference type="SMR" id="Q9PM24"/>
<dbReference type="IntAct" id="Q9PM24">
    <property type="interactions" value="18"/>
</dbReference>
<dbReference type="STRING" id="192222.Cj1652c"/>
<dbReference type="PaxDb" id="192222-Cj1652c"/>
<dbReference type="EnsemblBacteria" id="CAL35749">
    <property type="protein sequence ID" value="CAL35749"/>
    <property type="gene ID" value="Cj1652c"/>
</dbReference>
<dbReference type="GeneID" id="905925"/>
<dbReference type="KEGG" id="cje:Cj1652c"/>
<dbReference type="PATRIC" id="fig|192222.6.peg.1628"/>
<dbReference type="eggNOG" id="COG0796">
    <property type="taxonomic scope" value="Bacteria"/>
</dbReference>
<dbReference type="HOGENOM" id="CLU_052344_0_2_7"/>
<dbReference type="OrthoDB" id="9801055at2"/>
<dbReference type="UniPathway" id="UPA00219"/>
<dbReference type="EvolutionaryTrace" id="Q9PM24"/>
<dbReference type="Proteomes" id="UP000000799">
    <property type="component" value="Chromosome"/>
</dbReference>
<dbReference type="GO" id="GO:0008881">
    <property type="term" value="F:glutamate racemase activity"/>
    <property type="evidence" value="ECO:0007669"/>
    <property type="project" value="UniProtKB-UniRule"/>
</dbReference>
<dbReference type="GO" id="GO:0071555">
    <property type="term" value="P:cell wall organization"/>
    <property type="evidence" value="ECO:0007669"/>
    <property type="project" value="UniProtKB-KW"/>
</dbReference>
<dbReference type="GO" id="GO:0009252">
    <property type="term" value="P:peptidoglycan biosynthetic process"/>
    <property type="evidence" value="ECO:0007669"/>
    <property type="project" value="UniProtKB-UniRule"/>
</dbReference>
<dbReference type="GO" id="GO:0008360">
    <property type="term" value="P:regulation of cell shape"/>
    <property type="evidence" value="ECO:0007669"/>
    <property type="project" value="UniProtKB-KW"/>
</dbReference>
<dbReference type="FunFam" id="3.40.50.1860:FF:000001">
    <property type="entry name" value="Glutamate racemase"/>
    <property type="match status" value="1"/>
</dbReference>
<dbReference type="Gene3D" id="3.40.50.1860">
    <property type="match status" value="2"/>
</dbReference>
<dbReference type="HAMAP" id="MF_00258">
    <property type="entry name" value="Glu_racemase"/>
    <property type="match status" value="1"/>
</dbReference>
<dbReference type="InterPro" id="IPR015942">
    <property type="entry name" value="Asp/Glu/hydantoin_racemase"/>
</dbReference>
<dbReference type="InterPro" id="IPR001920">
    <property type="entry name" value="Asp/Glu_race"/>
</dbReference>
<dbReference type="InterPro" id="IPR018187">
    <property type="entry name" value="Asp/Glu_racemase_AS_1"/>
</dbReference>
<dbReference type="InterPro" id="IPR033134">
    <property type="entry name" value="Asp/Glu_racemase_AS_2"/>
</dbReference>
<dbReference type="InterPro" id="IPR004391">
    <property type="entry name" value="Glu_race"/>
</dbReference>
<dbReference type="NCBIfam" id="TIGR00067">
    <property type="entry name" value="glut_race"/>
    <property type="match status" value="1"/>
</dbReference>
<dbReference type="PANTHER" id="PTHR21198">
    <property type="entry name" value="GLUTAMATE RACEMASE"/>
    <property type="match status" value="1"/>
</dbReference>
<dbReference type="PANTHER" id="PTHR21198:SF2">
    <property type="entry name" value="GLUTAMATE RACEMASE"/>
    <property type="match status" value="1"/>
</dbReference>
<dbReference type="Pfam" id="PF01177">
    <property type="entry name" value="Asp_Glu_race"/>
    <property type="match status" value="1"/>
</dbReference>
<dbReference type="SUPFAM" id="SSF53681">
    <property type="entry name" value="Aspartate/glutamate racemase"/>
    <property type="match status" value="2"/>
</dbReference>
<dbReference type="PROSITE" id="PS00923">
    <property type="entry name" value="ASP_GLU_RACEMASE_1"/>
    <property type="match status" value="1"/>
</dbReference>
<dbReference type="PROSITE" id="PS00924">
    <property type="entry name" value="ASP_GLU_RACEMASE_2"/>
    <property type="match status" value="1"/>
</dbReference>
<comment type="function">
    <text evidence="2">Provides the (R)-glutamate required for cell wall biosynthesis.</text>
</comment>
<comment type="catalytic activity">
    <reaction evidence="2">
        <text>L-glutamate = D-glutamate</text>
        <dbReference type="Rhea" id="RHEA:12813"/>
        <dbReference type="ChEBI" id="CHEBI:29985"/>
        <dbReference type="ChEBI" id="CHEBI:29986"/>
        <dbReference type="EC" id="5.1.1.3"/>
    </reaction>
</comment>
<comment type="pathway">
    <text evidence="2">Cell wall biogenesis; peptidoglycan biosynthesis.</text>
</comment>
<comment type="similarity">
    <text evidence="2">Belongs to the aspartate/glutamate racemases family.</text>
</comment>
<reference key="1">
    <citation type="journal article" date="2000" name="Nature">
        <title>The genome sequence of the food-borne pathogen Campylobacter jejuni reveals hypervariable sequences.</title>
        <authorList>
            <person name="Parkhill J."/>
            <person name="Wren B.W."/>
            <person name="Mungall K.L."/>
            <person name="Ketley J.M."/>
            <person name="Churcher C.M."/>
            <person name="Basham D."/>
            <person name="Chillingworth T."/>
            <person name="Davies R.M."/>
            <person name="Feltwell T."/>
            <person name="Holroyd S."/>
            <person name="Jagels K."/>
            <person name="Karlyshev A.V."/>
            <person name="Moule S."/>
            <person name="Pallen M.J."/>
            <person name="Penn C.W."/>
            <person name="Quail M.A."/>
            <person name="Rajandream M.A."/>
            <person name="Rutherford K.M."/>
            <person name="van Vliet A.H.M."/>
            <person name="Whitehead S."/>
            <person name="Barrell B.G."/>
        </authorList>
    </citation>
    <scope>NUCLEOTIDE SEQUENCE [LARGE SCALE GENOMIC DNA]</scope>
    <source>
        <strain>ATCC 700819 / NCTC 11168</strain>
    </source>
</reference>
<reference key="2">
    <citation type="submission" date="2011-11" db="PDB data bank">
        <title>Crystal structure of glutamate racemase from Campylobacter jejuni subsp. jejuni.</title>
        <authorList>
            <consortium name="Center for structural genomics of infectious diseases (CSGID)"/>
        </authorList>
    </citation>
    <scope>X-RAY CRYSTALLOGRAPHY (1.83 ANGSTROMS) IN COMPLEX WITH SUBSTRATE</scope>
</reference>
<gene>
    <name evidence="2" type="primary">murI</name>
    <name type="ordered locus">Cj1652c</name>
</gene>
<accession>Q9PM24</accession>
<accession>Q0P7X6</accession>
<keyword id="KW-0002">3D-structure</keyword>
<keyword id="KW-0133">Cell shape</keyword>
<keyword id="KW-0961">Cell wall biogenesis/degradation</keyword>
<keyword id="KW-0413">Isomerase</keyword>
<keyword id="KW-0573">Peptidoglycan synthesis</keyword>
<keyword id="KW-1185">Reference proteome</keyword>
<proteinExistence type="evidence at protein level"/>